<sequence length="380" mass="43114">MTDHPIKYRLIKQEKHTGARLGEIITPHGTFPTPMFMPVGTQATVKTQSPEELKEMGSGIILSNTYHLWLRPGDELIAKAGGLHKFMNWDQAILTDSGGFQVYSLADSRNITEEGVTFKNHLNGAKMFLSPEKAISIQNNLGSDIMMSFDECPQFYQPYDYVKKSIERTSRWAERGLNAHRRPHDQGLFGIVQGAGFEDLRRQSARDLVSMDFPGYSIGGLAVGETHDEMNAVLDFTVPMLPNDKPRYLMGVGAPDSLIDAVIRGVDMFDCVLPTRIARNGTCMTSQGRLVVKNAKFAEDFTPLDPNCDCYTCKNYTRAYIRHLLKADETFGIRLTSYHNLYFLVNLMKDVRQAIMDDNLLEFRQDFMERYGYGMNNRNF</sequence>
<accession>Q8E1F9</accession>
<reference key="1">
    <citation type="journal article" date="2002" name="Proc. Natl. Acad. Sci. U.S.A.">
        <title>Complete genome sequence and comparative genomic analysis of an emerging human pathogen, serotype V Streptococcus agalactiae.</title>
        <authorList>
            <person name="Tettelin H."/>
            <person name="Masignani V."/>
            <person name="Cieslewicz M.J."/>
            <person name="Eisen J.A."/>
            <person name="Peterson S.N."/>
            <person name="Wessels M.R."/>
            <person name="Paulsen I.T."/>
            <person name="Nelson K.E."/>
            <person name="Margarit I."/>
            <person name="Read T.D."/>
            <person name="Madoff L.C."/>
            <person name="Wolf A.M."/>
            <person name="Beanan M.J."/>
            <person name="Brinkac L.M."/>
            <person name="Daugherty S.C."/>
            <person name="DeBoy R.T."/>
            <person name="Durkin A.S."/>
            <person name="Kolonay J.F."/>
            <person name="Madupu R."/>
            <person name="Lewis M.R."/>
            <person name="Radune D."/>
            <person name="Fedorova N.B."/>
            <person name="Scanlan D."/>
            <person name="Khouri H.M."/>
            <person name="Mulligan S."/>
            <person name="Carty H.A."/>
            <person name="Cline R.T."/>
            <person name="Van Aken S.E."/>
            <person name="Gill J."/>
            <person name="Scarselli M."/>
            <person name="Mora M."/>
            <person name="Iacobini E.T."/>
            <person name="Brettoni C."/>
            <person name="Galli G."/>
            <person name="Mariani M."/>
            <person name="Vegni F."/>
            <person name="Maione D."/>
            <person name="Rinaudo D."/>
            <person name="Rappuoli R."/>
            <person name="Telford J.L."/>
            <person name="Kasper D.L."/>
            <person name="Grandi G."/>
            <person name="Fraser C.M."/>
        </authorList>
    </citation>
    <scope>NUCLEOTIDE SEQUENCE [LARGE SCALE GENOMIC DNA]</scope>
    <source>
        <strain>ATCC BAA-611 / 2603 V/R</strain>
    </source>
</reference>
<proteinExistence type="inferred from homology"/>
<organism>
    <name type="scientific">Streptococcus agalactiae serotype V (strain ATCC BAA-611 / 2603 V/R)</name>
    <dbReference type="NCBI Taxonomy" id="208435"/>
    <lineage>
        <taxon>Bacteria</taxon>
        <taxon>Bacillati</taxon>
        <taxon>Bacillota</taxon>
        <taxon>Bacilli</taxon>
        <taxon>Lactobacillales</taxon>
        <taxon>Streptococcaceae</taxon>
        <taxon>Streptococcus</taxon>
    </lineage>
</organism>
<dbReference type="EC" id="2.4.2.29" evidence="1"/>
<dbReference type="EMBL" id="AE009948">
    <property type="protein sequence ID" value="AAM99302.1"/>
    <property type="molecule type" value="Genomic_DNA"/>
</dbReference>
<dbReference type="RefSeq" id="NP_687430.1">
    <property type="nucleotide sequence ID" value="NC_004116.1"/>
</dbReference>
<dbReference type="RefSeq" id="WP_000129510.1">
    <property type="nucleotide sequence ID" value="NC_004116.1"/>
</dbReference>
<dbReference type="SMR" id="Q8E1F9"/>
<dbReference type="STRING" id="208435.SAG0396"/>
<dbReference type="KEGG" id="sag:SAG0396"/>
<dbReference type="PATRIC" id="fig|208435.3.peg.391"/>
<dbReference type="HOGENOM" id="CLU_022060_0_1_9"/>
<dbReference type="OrthoDB" id="9805417at2"/>
<dbReference type="UniPathway" id="UPA00392"/>
<dbReference type="Proteomes" id="UP000000821">
    <property type="component" value="Chromosome"/>
</dbReference>
<dbReference type="GO" id="GO:0005829">
    <property type="term" value="C:cytosol"/>
    <property type="evidence" value="ECO:0007669"/>
    <property type="project" value="TreeGrafter"/>
</dbReference>
<dbReference type="GO" id="GO:0046872">
    <property type="term" value="F:metal ion binding"/>
    <property type="evidence" value="ECO:0007669"/>
    <property type="project" value="UniProtKB-KW"/>
</dbReference>
<dbReference type="GO" id="GO:0008479">
    <property type="term" value="F:tRNA-guanosine(34) queuine transglycosylase activity"/>
    <property type="evidence" value="ECO:0007669"/>
    <property type="project" value="UniProtKB-UniRule"/>
</dbReference>
<dbReference type="GO" id="GO:0008616">
    <property type="term" value="P:queuosine biosynthetic process"/>
    <property type="evidence" value="ECO:0007669"/>
    <property type="project" value="UniProtKB-UniRule"/>
</dbReference>
<dbReference type="GO" id="GO:0002099">
    <property type="term" value="P:tRNA wobble guanine modification"/>
    <property type="evidence" value="ECO:0007669"/>
    <property type="project" value="TreeGrafter"/>
</dbReference>
<dbReference type="GO" id="GO:0101030">
    <property type="term" value="P:tRNA-guanine transglycosylation"/>
    <property type="evidence" value="ECO:0007669"/>
    <property type="project" value="InterPro"/>
</dbReference>
<dbReference type="FunFam" id="3.20.20.105:FF:000001">
    <property type="entry name" value="Queuine tRNA-ribosyltransferase"/>
    <property type="match status" value="1"/>
</dbReference>
<dbReference type="Gene3D" id="3.20.20.105">
    <property type="entry name" value="Queuine tRNA-ribosyltransferase-like"/>
    <property type="match status" value="1"/>
</dbReference>
<dbReference type="HAMAP" id="MF_00168">
    <property type="entry name" value="Q_tRNA_Tgt"/>
    <property type="match status" value="1"/>
</dbReference>
<dbReference type="InterPro" id="IPR050076">
    <property type="entry name" value="ArchSynthase1/Queuine_TRR"/>
</dbReference>
<dbReference type="InterPro" id="IPR004803">
    <property type="entry name" value="TGT"/>
</dbReference>
<dbReference type="InterPro" id="IPR036511">
    <property type="entry name" value="TGT-like_sf"/>
</dbReference>
<dbReference type="InterPro" id="IPR002616">
    <property type="entry name" value="tRNA_ribo_trans-like"/>
</dbReference>
<dbReference type="NCBIfam" id="TIGR00430">
    <property type="entry name" value="Q_tRNA_tgt"/>
    <property type="match status" value="1"/>
</dbReference>
<dbReference type="NCBIfam" id="TIGR00449">
    <property type="entry name" value="tgt_general"/>
    <property type="match status" value="1"/>
</dbReference>
<dbReference type="PANTHER" id="PTHR46499">
    <property type="entry name" value="QUEUINE TRNA-RIBOSYLTRANSFERASE"/>
    <property type="match status" value="1"/>
</dbReference>
<dbReference type="PANTHER" id="PTHR46499:SF1">
    <property type="entry name" value="QUEUINE TRNA-RIBOSYLTRANSFERASE"/>
    <property type="match status" value="1"/>
</dbReference>
<dbReference type="Pfam" id="PF01702">
    <property type="entry name" value="TGT"/>
    <property type="match status" value="1"/>
</dbReference>
<dbReference type="SUPFAM" id="SSF51713">
    <property type="entry name" value="tRNA-guanine transglycosylase"/>
    <property type="match status" value="1"/>
</dbReference>
<gene>
    <name evidence="1" type="primary">tgt</name>
    <name type="ordered locus">SAG0396</name>
</gene>
<keyword id="KW-0328">Glycosyltransferase</keyword>
<keyword id="KW-0479">Metal-binding</keyword>
<keyword id="KW-0671">Queuosine biosynthesis</keyword>
<keyword id="KW-1185">Reference proteome</keyword>
<keyword id="KW-0808">Transferase</keyword>
<keyword id="KW-0819">tRNA processing</keyword>
<keyword id="KW-0862">Zinc</keyword>
<feature type="chain" id="PRO_0000135531" description="Queuine tRNA-ribosyltransferase">
    <location>
        <begin position="1"/>
        <end position="380"/>
    </location>
</feature>
<feature type="region of interest" description="RNA binding" evidence="1">
    <location>
        <begin position="251"/>
        <end position="257"/>
    </location>
</feature>
<feature type="region of interest" description="RNA binding; important for wobble base 34 recognition" evidence="1">
    <location>
        <begin position="275"/>
        <end position="279"/>
    </location>
</feature>
<feature type="active site" description="Proton acceptor" evidence="1">
    <location>
        <position position="96"/>
    </location>
</feature>
<feature type="active site" description="Nucleophile" evidence="1">
    <location>
        <position position="270"/>
    </location>
</feature>
<feature type="binding site" evidence="1">
    <location>
        <begin position="96"/>
        <end position="100"/>
    </location>
    <ligand>
        <name>substrate</name>
    </ligand>
</feature>
<feature type="binding site" evidence="1">
    <location>
        <position position="150"/>
    </location>
    <ligand>
        <name>substrate</name>
    </ligand>
</feature>
<feature type="binding site" evidence="1">
    <location>
        <position position="193"/>
    </location>
    <ligand>
        <name>substrate</name>
    </ligand>
</feature>
<feature type="binding site" evidence="1">
    <location>
        <position position="220"/>
    </location>
    <ligand>
        <name>substrate</name>
    </ligand>
</feature>
<feature type="binding site" evidence="1">
    <location>
        <position position="308"/>
    </location>
    <ligand>
        <name>Zn(2+)</name>
        <dbReference type="ChEBI" id="CHEBI:29105"/>
    </ligand>
</feature>
<feature type="binding site" evidence="1">
    <location>
        <position position="310"/>
    </location>
    <ligand>
        <name>Zn(2+)</name>
        <dbReference type="ChEBI" id="CHEBI:29105"/>
    </ligand>
</feature>
<feature type="binding site" evidence="1">
    <location>
        <position position="313"/>
    </location>
    <ligand>
        <name>Zn(2+)</name>
        <dbReference type="ChEBI" id="CHEBI:29105"/>
    </ligand>
</feature>
<feature type="binding site" evidence="1">
    <location>
        <position position="339"/>
    </location>
    <ligand>
        <name>Zn(2+)</name>
        <dbReference type="ChEBI" id="CHEBI:29105"/>
    </ligand>
</feature>
<name>TGT_STRA5</name>
<comment type="function">
    <text evidence="1">Catalyzes the base-exchange of a guanine (G) residue with the queuine precursor 7-aminomethyl-7-deazaguanine (PreQ1) at position 34 (anticodon wobble position) in tRNAs with GU(N) anticodons (tRNA-Asp, -Asn, -His and -Tyr). Catalysis occurs through a double-displacement mechanism. The nucleophile active site attacks the C1' of nucleotide 34 to detach the guanine base from the RNA, forming a covalent enzyme-RNA intermediate. The proton acceptor active site deprotonates the incoming PreQ1, allowing a nucleophilic attack on the C1' of the ribose to form the product. After dissociation, two additional enzymatic reactions on the tRNA convert PreQ1 to queuine (Q), resulting in the hypermodified nucleoside queuosine (7-(((4,5-cis-dihydroxy-2-cyclopenten-1-yl)amino)methyl)-7-deazaguanosine).</text>
</comment>
<comment type="catalytic activity">
    <reaction evidence="1">
        <text>7-aminomethyl-7-carbaguanine + guanosine(34) in tRNA = 7-aminomethyl-7-carbaguanosine(34) in tRNA + guanine</text>
        <dbReference type="Rhea" id="RHEA:24104"/>
        <dbReference type="Rhea" id="RHEA-COMP:10341"/>
        <dbReference type="Rhea" id="RHEA-COMP:10342"/>
        <dbReference type="ChEBI" id="CHEBI:16235"/>
        <dbReference type="ChEBI" id="CHEBI:58703"/>
        <dbReference type="ChEBI" id="CHEBI:74269"/>
        <dbReference type="ChEBI" id="CHEBI:82833"/>
        <dbReference type="EC" id="2.4.2.29"/>
    </reaction>
</comment>
<comment type="cofactor">
    <cofactor evidence="1">
        <name>Zn(2+)</name>
        <dbReference type="ChEBI" id="CHEBI:29105"/>
    </cofactor>
    <text evidence="1">Binds 1 zinc ion per subunit.</text>
</comment>
<comment type="pathway">
    <text evidence="1">tRNA modification; tRNA-queuosine biosynthesis.</text>
</comment>
<comment type="subunit">
    <text evidence="1">Homodimer. Within each dimer, one monomer is responsible for RNA recognition and catalysis, while the other monomer binds to the replacement base PreQ1.</text>
</comment>
<comment type="similarity">
    <text evidence="1">Belongs to the queuine tRNA-ribosyltransferase family.</text>
</comment>
<evidence type="ECO:0000255" key="1">
    <source>
        <dbReference type="HAMAP-Rule" id="MF_00168"/>
    </source>
</evidence>
<protein>
    <recommendedName>
        <fullName evidence="1">Queuine tRNA-ribosyltransferase</fullName>
        <ecNumber evidence="1">2.4.2.29</ecNumber>
    </recommendedName>
    <alternativeName>
        <fullName evidence="1">Guanine insertion enzyme</fullName>
    </alternativeName>
    <alternativeName>
        <fullName evidence="1">tRNA-guanine transglycosylase</fullName>
    </alternativeName>
</protein>